<name>RECO_DELAS</name>
<evidence type="ECO:0000255" key="1">
    <source>
        <dbReference type="HAMAP-Rule" id="MF_00201"/>
    </source>
</evidence>
<comment type="function">
    <text evidence="1">Involved in DNA repair and RecF pathway recombination.</text>
</comment>
<comment type="similarity">
    <text evidence="1">Belongs to the RecO family.</text>
</comment>
<feature type="chain" id="PRO_1000099376" description="DNA repair protein RecO">
    <location>
        <begin position="1"/>
        <end position="256"/>
    </location>
</feature>
<protein>
    <recommendedName>
        <fullName evidence="1">DNA repair protein RecO</fullName>
    </recommendedName>
    <alternativeName>
        <fullName evidence="1">Recombination protein O</fullName>
    </alternativeName>
</protein>
<keyword id="KW-0227">DNA damage</keyword>
<keyword id="KW-0233">DNA recombination</keyword>
<keyword id="KW-0234">DNA repair</keyword>
<keyword id="KW-1185">Reference proteome</keyword>
<dbReference type="EMBL" id="CP000884">
    <property type="protein sequence ID" value="ABX37888.1"/>
    <property type="molecule type" value="Genomic_DNA"/>
</dbReference>
<dbReference type="RefSeq" id="WP_012207058.1">
    <property type="nucleotide sequence ID" value="NC_010002.1"/>
</dbReference>
<dbReference type="SMR" id="A9BNJ3"/>
<dbReference type="STRING" id="398578.Daci_5259"/>
<dbReference type="GeneID" id="24117200"/>
<dbReference type="KEGG" id="dac:Daci_5259"/>
<dbReference type="eggNOG" id="COG1381">
    <property type="taxonomic scope" value="Bacteria"/>
</dbReference>
<dbReference type="HOGENOM" id="CLU_066645_0_0_4"/>
<dbReference type="Proteomes" id="UP000000784">
    <property type="component" value="Chromosome"/>
</dbReference>
<dbReference type="GO" id="GO:0043590">
    <property type="term" value="C:bacterial nucleoid"/>
    <property type="evidence" value="ECO:0007669"/>
    <property type="project" value="TreeGrafter"/>
</dbReference>
<dbReference type="GO" id="GO:0006310">
    <property type="term" value="P:DNA recombination"/>
    <property type="evidence" value="ECO:0007669"/>
    <property type="project" value="UniProtKB-UniRule"/>
</dbReference>
<dbReference type="GO" id="GO:0006302">
    <property type="term" value="P:double-strand break repair"/>
    <property type="evidence" value="ECO:0007669"/>
    <property type="project" value="TreeGrafter"/>
</dbReference>
<dbReference type="Gene3D" id="2.40.50.140">
    <property type="entry name" value="Nucleic acid-binding proteins"/>
    <property type="match status" value="1"/>
</dbReference>
<dbReference type="Gene3D" id="1.20.1440.120">
    <property type="entry name" value="Recombination protein O, C-terminal domain"/>
    <property type="match status" value="1"/>
</dbReference>
<dbReference type="HAMAP" id="MF_00201">
    <property type="entry name" value="RecO"/>
    <property type="match status" value="1"/>
</dbReference>
<dbReference type="InterPro" id="IPR037278">
    <property type="entry name" value="ARFGAP/RecO"/>
</dbReference>
<dbReference type="InterPro" id="IPR022572">
    <property type="entry name" value="DNA_rep/recomb_RecO_N"/>
</dbReference>
<dbReference type="InterPro" id="IPR012340">
    <property type="entry name" value="NA-bd_OB-fold"/>
</dbReference>
<dbReference type="InterPro" id="IPR003717">
    <property type="entry name" value="RecO"/>
</dbReference>
<dbReference type="InterPro" id="IPR042242">
    <property type="entry name" value="RecO_C"/>
</dbReference>
<dbReference type="NCBIfam" id="TIGR00613">
    <property type="entry name" value="reco"/>
    <property type="match status" value="1"/>
</dbReference>
<dbReference type="PANTHER" id="PTHR33991">
    <property type="entry name" value="DNA REPAIR PROTEIN RECO"/>
    <property type="match status" value="1"/>
</dbReference>
<dbReference type="PANTHER" id="PTHR33991:SF1">
    <property type="entry name" value="DNA REPAIR PROTEIN RECO"/>
    <property type="match status" value="1"/>
</dbReference>
<dbReference type="Pfam" id="PF02565">
    <property type="entry name" value="RecO_C"/>
    <property type="match status" value="1"/>
</dbReference>
<dbReference type="Pfam" id="PF11967">
    <property type="entry name" value="RecO_N"/>
    <property type="match status" value="1"/>
</dbReference>
<dbReference type="SUPFAM" id="SSF57863">
    <property type="entry name" value="ArfGap/RecO-like zinc finger"/>
    <property type="match status" value="1"/>
</dbReference>
<dbReference type="SUPFAM" id="SSF50249">
    <property type="entry name" value="Nucleic acid-binding proteins"/>
    <property type="match status" value="1"/>
</dbReference>
<reference key="1">
    <citation type="submission" date="2007-11" db="EMBL/GenBank/DDBJ databases">
        <title>Complete sequence of Delftia acidovorans DSM 14801 / SPH-1.</title>
        <authorList>
            <person name="Copeland A."/>
            <person name="Lucas S."/>
            <person name="Lapidus A."/>
            <person name="Barry K."/>
            <person name="Glavina del Rio T."/>
            <person name="Dalin E."/>
            <person name="Tice H."/>
            <person name="Pitluck S."/>
            <person name="Lowry S."/>
            <person name="Clum A."/>
            <person name="Schmutz J."/>
            <person name="Larimer F."/>
            <person name="Land M."/>
            <person name="Hauser L."/>
            <person name="Kyrpides N."/>
            <person name="Kim E."/>
            <person name="Schleheck D."/>
            <person name="Richardson P."/>
        </authorList>
    </citation>
    <scope>NUCLEOTIDE SEQUENCE [LARGE SCALE GENOMIC DNA]</scope>
    <source>
        <strain>DSM 14801 / SPH-1</strain>
    </source>
</reference>
<proteinExistence type="inferred from homology"/>
<sequence length="256" mass="28000">MASAKRVSDEPAYVLHSYDWSESSLILEVFTRHRGRVALAAKGVKRPTSNFRPVLLPLQPLSLSYSLGGEGNAEIHTLKGAEWVGGHVMPQGDALMSGLYLNELLMRLLARDDPYAALFDIYAGVVRVLAGQHGDAIEPVLRTFELLLLRELGHLPALNEESATLAPLAEGRRYALVAEGGLRPALQGERAVLGAAQWQAIESALQARQAFNATLHVVAQPEQALALKPQLRALLQYHCGSPMLRTRQLMMDLQSL</sequence>
<accession>A9BNJ3</accession>
<organism>
    <name type="scientific">Delftia acidovorans (strain DSM 14801 / SPH-1)</name>
    <dbReference type="NCBI Taxonomy" id="398578"/>
    <lineage>
        <taxon>Bacteria</taxon>
        <taxon>Pseudomonadati</taxon>
        <taxon>Pseudomonadota</taxon>
        <taxon>Betaproteobacteria</taxon>
        <taxon>Burkholderiales</taxon>
        <taxon>Comamonadaceae</taxon>
        <taxon>Delftia</taxon>
    </lineage>
</organism>
<gene>
    <name evidence="1" type="primary">recO</name>
    <name type="ordered locus">Daci_5259</name>
</gene>